<feature type="chain" id="PRO_1000187148" description="D-ribose pyranase">
    <location>
        <begin position="1"/>
        <end position="139"/>
    </location>
</feature>
<feature type="active site" description="Proton donor" evidence="1">
    <location>
        <position position="20"/>
    </location>
</feature>
<feature type="binding site" evidence="1">
    <location>
        <position position="28"/>
    </location>
    <ligand>
        <name>substrate</name>
    </ligand>
</feature>
<feature type="binding site" evidence="1">
    <location>
        <position position="106"/>
    </location>
    <ligand>
        <name>substrate</name>
    </ligand>
</feature>
<feature type="binding site" evidence="1">
    <location>
        <begin position="128"/>
        <end position="130"/>
    </location>
    <ligand>
        <name>substrate</name>
    </ligand>
</feature>
<dbReference type="EC" id="5.4.99.62" evidence="1"/>
<dbReference type="EMBL" id="AP009240">
    <property type="protein sequence ID" value="BAG79562.1"/>
    <property type="molecule type" value="Genomic_DNA"/>
</dbReference>
<dbReference type="RefSeq" id="WP_001297694.1">
    <property type="nucleotide sequence ID" value="NC_011415.1"/>
</dbReference>
<dbReference type="SMR" id="B6I3Y5"/>
<dbReference type="GeneID" id="75205466"/>
<dbReference type="KEGG" id="ecy:ECSE_4038"/>
<dbReference type="HOGENOM" id="CLU_135498_0_0_6"/>
<dbReference type="UniPathway" id="UPA00916">
    <property type="reaction ID" value="UER00888"/>
</dbReference>
<dbReference type="Proteomes" id="UP000008199">
    <property type="component" value="Chromosome"/>
</dbReference>
<dbReference type="GO" id="GO:0005829">
    <property type="term" value="C:cytosol"/>
    <property type="evidence" value="ECO:0007669"/>
    <property type="project" value="TreeGrafter"/>
</dbReference>
<dbReference type="GO" id="GO:0062193">
    <property type="term" value="F:D-ribose pyranase activity"/>
    <property type="evidence" value="ECO:0007669"/>
    <property type="project" value="UniProtKB-EC"/>
</dbReference>
<dbReference type="GO" id="GO:0016872">
    <property type="term" value="F:intramolecular lyase activity"/>
    <property type="evidence" value="ECO:0007669"/>
    <property type="project" value="UniProtKB-UniRule"/>
</dbReference>
<dbReference type="GO" id="GO:0048029">
    <property type="term" value="F:monosaccharide binding"/>
    <property type="evidence" value="ECO:0007669"/>
    <property type="project" value="InterPro"/>
</dbReference>
<dbReference type="GO" id="GO:0019303">
    <property type="term" value="P:D-ribose catabolic process"/>
    <property type="evidence" value="ECO:0007669"/>
    <property type="project" value="UniProtKB-UniRule"/>
</dbReference>
<dbReference type="FunFam" id="3.40.1650.10:FF:000002">
    <property type="entry name" value="D-ribose pyranase"/>
    <property type="match status" value="1"/>
</dbReference>
<dbReference type="Gene3D" id="3.40.1650.10">
    <property type="entry name" value="RbsD-like domain"/>
    <property type="match status" value="1"/>
</dbReference>
<dbReference type="HAMAP" id="MF_01661">
    <property type="entry name" value="D_rib_pyranase"/>
    <property type="match status" value="1"/>
</dbReference>
<dbReference type="InterPro" id="IPR023064">
    <property type="entry name" value="D-ribose_pyranase"/>
</dbReference>
<dbReference type="InterPro" id="IPR023750">
    <property type="entry name" value="RbsD-like_sf"/>
</dbReference>
<dbReference type="InterPro" id="IPR007721">
    <property type="entry name" value="RbsD_FucU"/>
</dbReference>
<dbReference type="NCBIfam" id="NF008761">
    <property type="entry name" value="PRK11797.1"/>
    <property type="match status" value="1"/>
</dbReference>
<dbReference type="PANTHER" id="PTHR37831">
    <property type="entry name" value="D-RIBOSE PYRANASE"/>
    <property type="match status" value="1"/>
</dbReference>
<dbReference type="PANTHER" id="PTHR37831:SF1">
    <property type="entry name" value="D-RIBOSE PYRANASE"/>
    <property type="match status" value="1"/>
</dbReference>
<dbReference type="Pfam" id="PF05025">
    <property type="entry name" value="RbsD_FucU"/>
    <property type="match status" value="1"/>
</dbReference>
<dbReference type="SUPFAM" id="SSF102546">
    <property type="entry name" value="RbsD-like"/>
    <property type="match status" value="1"/>
</dbReference>
<comment type="function">
    <text evidence="1">Catalyzes the interconversion of beta-pyran and beta-furan forms of D-ribose.</text>
</comment>
<comment type="catalytic activity">
    <reaction evidence="1">
        <text>beta-D-ribopyranose = beta-D-ribofuranose</text>
        <dbReference type="Rhea" id="RHEA:25432"/>
        <dbReference type="ChEBI" id="CHEBI:27476"/>
        <dbReference type="ChEBI" id="CHEBI:47002"/>
        <dbReference type="EC" id="5.4.99.62"/>
    </reaction>
</comment>
<comment type="pathway">
    <text evidence="1">Carbohydrate metabolism; D-ribose degradation; D-ribose 5-phosphate from beta-D-ribopyranose: step 1/2.</text>
</comment>
<comment type="subunit">
    <text evidence="1">Homodecamer.</text>
</comment>
<comment type="subcellular location">
    <subcellularLocation>
        <location evidence="1">Cytoplasm</location>
    </subcellularLocation>
</comment>
<comment type="similarity">
    <text evidence="1">Belongs to the RbsD / FucU family. RbsD subfamily.</text>
</comment>
<sequence>MKKGTVLNSDISSMISRLGHTDTLVVCDAGLPIPKSTTRIDMALTQGVPSFMQVLGVVTNEMQVEAAIIAEEIKQHNPQLHETLLTHLEQLQKHQGNTIEIRYTTHEQFKQQTAESQAVIRSGECSPYANIILCAGVTF</sequence>
<proteinExistence type="inferred from homology"/>
<protein>
    <recommendedName>
        <fullName evidence="1">D-ribose pyranase</fullName>
        <ecNumber evidence="1">5.4.99.62</ecNumber>
    </recommendedName>
</protein>
<organism>
    <name type="scientific">Escherichia coli (strain SE11)</name>
    <dbReference type="NCBI Taxonomy" id="409438"/>
    <lineage>
        <taxon>Bacteria</taxon>
        <taxon>Pseudomonadati</taxon>
        <taxon>Pseudomonadota</taxon>
        <taxon>Gammaproteobacteria</taxon>
        <taxon>Enterobacterales</taxon>
        <taxon>Enterobacteriaceae</taxon>
        <taxon>Escherichia</taxon>
    </lineage>
</organism>
<name>RBSD_ECOSE</name>
<keyword id="KW-0119">Carbohydrate metabolism</keyword>
<keyword id="KW-0963">Cytoplasm</keyword>
<keyword id="KW-0413">Isomerase</keyword>
<reference key="1">
    <citation type="journal article" date="2008" name="DNA Res.">
        <title>Complete genome sequence and comparative analysis of the wild-type commensal Escherichia coli strain SE11 isolated from a healthy adult.</title>
        <authorList>
            <person name="Oshima K."/>
            <person name="Toh H."/>
            <person name="Ogura Y."/>
            <person name="Sasamoto H."/>
            <person name="Morita H."/>
            <person name="Park S.-H."/>
            <person name="Ooka T."/>
            <person name="Iyoda S."/>
            <person name="Taylor T.D."/>
            <person name="Hayashi T."/>
            <person name="Itoh K."/>
            <person name="Hattori M."/>
        </authorList>
    </citation>
    <scope>NUCLEOTIDE SEQUENCE [LARGE SCALE GENOMIC DNA]</scope>
    <source>
        <strain>SE11</strain>
    </source>
</reference>
<evidence type="ECO:0000255" key="1">
    <source>
        <dbReference type="HAMAP-Rule" id="MF_01661"/>
    </source>
</evidence>
<gene>
    <name evidence="1" type="primary">rbsD</name>
    <name type="ordered locus">ECSE_4038</name>
</gene>
<accession>B6I3Y5</accession>